<accession>A3MKY3</accession>
<protein>
    <recommendedName>
        <fullName>Putative 4-hydroxy-4-methyl-2-oxoglutarate aldolase</fullName>
        <shortName>HMG aldolase</shortName>
        <ecNumber>4.1.3.17</ecNumber>
    </recommendedName>
    <alternativeName>
        <fullName>Oxaloacetate decarboxylase</fullName>
        <shortName>OAA decarboxylase</shortName>
        <ecNumber>4.1.1.112</ecNumber>
    </alternativeName>
    <alternativeName>
        <fullName>Regulator of ribonuclease activity homolog</fullName>
    </alternativeName>
    <alternativeName>
        <fullName>RraA-like protein</fullName>
    </alternativeName>
</protein>
<gene>
    <name type="ordered locus">BMA10247_1368</name>
</gene>
<dbReference type="EC" id="4.1.3.17"/>
<dbReference type="EC" id="4.1.1.112"/>
<dbReference type="EMBL" id="CP000548">
    <property type="protein sequence ID" value="ABO06564.1"/>
    <property type="molecule type" value="Genomic_DNA"/>
</dbReference>
<dbReference type="SMR" id="A3MKY3"/>
<dbReference type="KEGG" id="bmaz:BM44_1763"/>
<dbReference type="KEGG" id="bmn:BMA10247_1368"/>
<dbReference type="PATRIC" id="fig|320389.8.peg.1972"/>
<dbReference type="GO" id="GO:0047443">
    <property type="term" value="F:4-hydroxy-4-methyl-2-oxoglutarate aldolase activity"/>
    <property type="evidence" value="ECO:0007669"/>
    <property type="project" value="UniProtKB-EC"/>
</dbReference>
<dbReference type="GO" id="GO:0046872">
    <property type="term" value="F:metal ion binding"/>
    <property type="evidence" value="ECO:0007669"/>
    <property type="project" value="UniProtKB-KW"/>
</dbReference>
<dbReference type="GO" id="GO:0008948">
    <property type="term" value="F:oxaloacetate decarboxylase activity"/>
    <property type="evidence" value="ECO:0007669"/>
    <property type="project" value="UniProtKB-EC"/>
</dbReference>
<dbReference type="GO" id="GO:0008428">
    <property type="term" value="F:ribonuclease inhibitor activity"/>
    <property type="evidence" value="ECO:0007669"/>
    <property type="project" value="InterPro"/>
</dbReference>
<dbReference type="GO" id="GO:0051252">
    <property type="term" value="P:regulation of RNA metabolic process"/>
    <property type="evidence" value="ECO:0007669"/>
    <property type="project" value="InterPro"/>
</dbReference>
<dbReference type="CDD" id="cd16841">
    <property type="entry name" value="RraA_family"/>
    <property type="match status" value="1"/>
</dbReference>
<dbReference type="Gene3D" id="3.50.30.40">
    <property type="entry name" value="Ribonuclease E inhibitor RraA/RraA-like"/>
    <property type="match status" value="1"/>
</dbReference>
<dbReference type="InterPro" id="IPR010203">
    <property type="entry name" value="RraA"/>
</dbReference>
<dbReference type="InterPro" id="IPR005493">
    <property type="entry name" value="RraA/RraA-like"/>
</dbReference>
<dbReference type="InterPro" id="IPR036704">
    <property type="entry name" value="RraA/RraA-like_sf"/>
</dbReference>
<dbReference type="NCBIfam" id="TIGR01935">
    <property type="entry name" value="NOT-MenG"/>
    <property type="match status" value="1"/>
</dbReference>
<dbReference type="NCBIfam" id="NF006875">
    <property type="entry name" value="PRK09372.1"/>
    <property type="match status" value="1"/>
</dbReference>
<dbReference type="PANTHER" id="PTHR33254">
    <property type="entry name" value="4-HYDROXY-4-METHYL-2-OXOGLUTARATE ALDOLASE 3-RELATED"/>
    <property type="match status" value="1"/>
</dbReference>
<dbReference type="PANTHER" id="PTHR33254:SF4">
    <property type="entry name" value="4-HYDROXY-4-METHYL-2-OXOGLUTARATE ALDOLASE 3-RELATED"/>
    <property type="match status" value="1"/>
</dbReference>
<dbReference type="Pfam" id="PF03737">
    <property type="entry name" value="RraA-like"/>
    <property type="match status" value="1"/>
</dbReference>
<dbReference type="SUPFAM" id="SSF89562">
    <property type="entry name" value="RraA-like"/>
    <property type="match status" value="1"/>
</dbReference>
<name>RRAAH_BURM7</name>
<keyword id="KW-0456">Lyase</keyword>
<keyword id="KW-0479">Metal-binding</keyword>
<evidence type="ECO:0000250" key="1"/>
<evidence type="ECO:0000305" key="2"/>
<feature type="chain" id="PRO_1000013825" description="Putative 4-hydroxy-4-methyl-2-oxoglutarate aldolase">
    <location>
        <begin position="1"/>
        <end position="165"/>
    </location>
</feature>
<feature type="binding site" evidence="1">
    <location>
        <begin position="80"/>
        <end position="83"/>
    </location>
    <ligand>
        <name>substrate</name>
    </ligand>
</feature>
<feature type="binding site" evidence="1">
    <location>
        <position position="102"/>
    </location>
    <ligand>
        <name>substrate</name>
    </ligand>
</feature>
<feature type="binding site" evidence="1">
    <location>
        <position position="103"/>
    </location>
    <ligand>
        <name>a divalent metal cation</name>
        <dbReference type="ChEBI" id="CHEBI:60240"/>
    </ligand>
</feature>
<organism>
    <name type="scientific">Burkholderia mallei (strain NCTC 10247)</name>
    <dbReference type="NCBI Taxonomy" id="320389"/>
    <lineage>
        <taxon>Bacteria</taxon>
        <taxon>Pseudomonadati</taxon>
        <taxon>Pseudomonadota</taxon>
        <taxon>Betaproteobacteria</taxon>
        <taxon>Burkholderiales</taxon>
        <taxon>Burkholderiaceae</taxon>
        <taxon>Burkholderia</taxon>
        <taxon>pseudomallei group</taxon>
    </lineage>
</organism>
<proteinExistence type="inferred from homology"/>
<sequence length="165" mass="17301">MMFATTDLCDAHEDRLAAGTLRVLEPVFRPFGGVRRFAGPAATLKLFEDNSLVRTALEQDGAGRVLVVDGGGSLRCALVGGNLGKLAEKNGWAGIVVNGCVRDSDELAECRVGVLALAAHPRKSDKRGAGVSDAPVDVRGTRIVPGDWIYADADGVLVSDDALLE</sequence>
<reference key="1">
    <citation type="journal article" date="2010" name="Genome Biol. Evol.">
        <title>Continuing evolution of Burkholderia mallei through genome reduction and large-scale rearrangements.</title>
        <authorList>
            <person name="Losada L."/>
            <person name="Ronning C.M."/>
            <person name="DeShazer D."/>
            <person name="Woods D."/>
            <person name="Fedorova N."/>
            <person name="Kim H.S."/>
            <person name="Shabalina S.A."/>
            <person name="Pearson T.R."/>
            <person name="Brinkac L."/>
            <person name="Tan P."/>
            <person name="Nandi T."/>
            <person name="Crabtree J."/>
            <person name="Badger J."/>
            <person name="Beckstrom-Sternberg S."/>
            <person name="Saqib M."/>
            <person name="Schutzer S.E."/>
            <person name="Keim P."/>
            <person name="Nierman W.C."/>
        </authorList>
    </citation>
    <scope>NUCLEOTIDE SEQUENCE [LARGE SCALE GENOMIC DNA]</scope>
    <source>
        <strain>NCTC 10247</strain>
    </source>
</reference>
<comment type="function">
    <text evidence="1">Catalyzes the aldol cleavage of 4-hydroxy-4-methyl-2-oxoglutarate (HMG) into 2 molecules of pyruvate. Also contains a secondary oxaloacetate (OAA) decarboxylase activity due to the common pyruvate enolate transition state formed following C-C bond cleavage in the retro-aldol and decarboxylation reactions (By similarity).</text>
</comment>
<comment type="catalytic activity">
    <reaction>
        <text>4-hydroxy-4-methyl-2-oxoglutarate = 2 pyruvate</text>
        <dbReference type="Rhea" id="RHEA:22748"/>
        <dbReference type="ChEBI" id="CHEBI:15361"/>
        <dbReference type="ChEBI" id="CHEBI:58276"/>
        <dbReference type="EC" id="4.1.3.17"/>
    </reaction>
</comment>
<comment type="catalytic activity">
    <reaction>
        <text>oxaloacetate + H(+) = pyruvate + CO2</text>
        <dbReference type="Rhea" id="RHEA:15641"/>
        <dbReference type="ChEBI" id="CHEBI:15361"/>
        <dbReference type="ChEBI" id="CHEBI:15378"/>
        <dbReference type="ChEBI" id="CHEBI:16452"/>
        <dbReference type="ChEBI" id="CHEBI:16526"/>
        <dbReference type="EC" id="4.1.1.112"/>
    </reaction>
</comment>
<comment type="cofactor">
    <cofactor evidence="1">
        <name>a divalent metal cation</name>
        <dbReference type="ChEBI" id="CHEBI:60240"/>
    </cofactor>
    <text evidence="1">Divalent metal cation.</text>
</comment>
<comment type="subunit">
    <text evidence="1">Homotrimer.</text>
</comment>
<comment type="similarity">
    <text evidence="2">Belongs to the class II aldolase/RraA-like family.</text>
</comment>